<evidence type="ECO:0000250" key="1"/>
<evidence type="ECO:0000250" key="2">
    <source>
        <dbReference type="UniProtKB" id="P07900"/>
    </source>
</evidence>
<evidence type="ECO:0000250" key="3">
    <source>
        <dbReference type="UniProtKB" id="P07901"/>
    </source>
</evidence>
<evidence type="ECO:0000250" key="4">
    <source>
        <dbReference type="UniProtKB" id="P82995"/>
    </source>
</evidence>
<evidence type="ECO:0000256" key="5">
    <source>
        <dbReference type="SAM" id="MobiDB-lite"/>
    </source>
</evidence>
<evidence type="ECO:0000305" key="6"/>
<sequence length="733" mass="84849">MPEETQTQDQPMEEEEVETFAFQAEIAQLMSLIINTFYSNKEIFLRELISNSSDALDKIRYESLTDPSKLDSGKELHINIIPNKQDRTLTIVDTGIGMTKADLINNLGTIAKSGTKAFMEALQAGADISMIGQFGVGFYTAYLVAEKVTVITKHNDDEQYAWESSAGGSFTVRTDTGEPMGRGTKVILHLKEDQTEYMEERRIKEIVKKHSQFIGYPITLFVEKERDKEVSDDEAEEKEDKEEEKEKEEKGIDDKPEIEDVGSDEEEEEKKDGDKKKKKKIKEKYIDQEELNKTKPIWTRNPDDITNEEYGEFYKSLTNDWEEHLAVKHFSVEGQLEFRALLFVPRRAPFDLFENRKKKNNIKLYVRRVFIMDNCEELFPEYLNFIRGVVDSEDLPLNISREILQQSKILKVIRKNLVRKCLELFHELAEDKENYKKFYEQFSKNIKLGIHEDSQNRKKLSELLRYYTSASGDEMVSLKDYCTRMKENQKHIYFITGETKDQVANSAFVERLRKHGLEVIYMIEPIDEYCVQQLKEFEGKTLVSVTKEGLELPEDEEEKKKQEEKKTKFENLCKIMKDILEKKVEKVVVSNRLVTSPCCIVTSTYGWTANMERIIKAQALRDNSTMGYMAAKKHLEINPDHSIIETLRQKAEADKNDKSVKDLVILLYETALLSSGFSLEDPQTHANRIYRMIKLGLGIDEDDPTVDDTSAAVTEEMPPLEGDDDTSRMEEVD</sequence>
<proteinExistence type="evidence at transcript level"/>
<organism>
    <name type="scientific">Cricetulus griseus</name>
    <name type="common">Chinese hamster</name>
    <name type="synonym">Cricetulus barabensis griseus</name>
    <dbReference type="NCBI Taxonomy" id="10029"/>
    <lineage>
        <taxon>Eukaryota</taxon>
        <taxon>Metazoa</taxon>
        <taxon>Chordata</taxon>
        <taxon>Craniata</taxon>
        <taxon>Vertebrata</taxon>
        <taxon>Euteleostomi</taxon>
        <taxon>Mammalia</taxon>
        <taxon>Eutheria</taxon>
        <taxon>Euarchontoglires</taxon>
        <taxon>Glires</taxon>
        <taxon>Rodentia</taxon>
        <taxon>Myomorpha</taxon>
        <taxon>Muroidea</taxon>
        <taxon>Cricetidae</taxon>
        <taxon>Cricetinae</taxon>
        <taxon>Cricetulus</taxon>
    </lineage>
</organism>
<protein>
    <recommendedName>
        <fullName>Heat shock protein HSP 90-alpha</fullName>
        <ecNumber evidence="2">3.6.4.10</ecNumber>
    </recommendedName>
</protein>
<accession>P46633</accession>
<reference key="1">
    <citation type="submission" date="1995-07" db="EMBL/GenBank/DDBJ databases">
        <title>Characterization of a cDNA clone encoding HSP90A from Chinese hamster cells.</title>
        <authorList>
            <person name="Chen M.-S.M.C."/>
            <person name="Laszlo A."/>
        </authorList>
    </citation>
    <scope>NUCLEOTIDE SEQUENCE [MRNA]</scope>
</reference>
<comment type="function">
    <text evidence="2">Molecular chaperone that promotes the maturation, structural maintenance and proper regulation of specific target proteins involved for instance in cell cycle control and signal transduction. Undergoes a functional cycle that is linked to its ATPase activity which is essential for its chaperone activity. This cycle probably induces conformational changes in the client proteins, thereby causing their activation. Interacts dynamically with various co-chaperones that modulate its substrate recognition, ATPase cycle and chaperone function. Engages with a range of client protein classes via its interaction with various co-chaperone proteins or complexes, that act as adapters, simultaneously able to interact with the specific client and the central chaperone itself. Recruitment of ATP and co-chaperone followed by client protein forms a functional chaperone. After the completion of the chaperoning process, properly folded client protein and co-chaperone leave HSP90 in an ADP-bound partially open conformation and finally, ADP is released from HSP90 which acquires an open conformation for the next cycle. Plays a critical role in mitochondrial import, delivers preproteins to the mitochondrial import receptor TOMM70. Apart from its chaperone activity, it also plays a role in the regulation of the transcription machinery. HSP90 and its co-chaperones modulate transcription at least at three different levels. In the first place, they alter the steady-state levels of certain transcription factors in response to various physiological cues. Second, they modulate the activity of certain epigenetic modifiers, such as histone deacetylases or DNA methyl transferases, and thereby respond to the change in the environment. Third, they participate in the eviction of histones from the promoter region of certain genes and thereby turn on gene expression. Binds bacterial lipopolysaccharide (LPS) and mediates LPS-induced inflammatory response, including TNF secretion by monocytes. Antagonizes STUB1-mediated inhibition of TGF-beta signaling via inhibition of STUB1-mediated SMAD3 ubiquitination and degradation. Mediates the association of TOMM70 with IRF3 or TBK1 in mitochondrial outer membrane which promotes host antiviral response.</text>
</comment>
<comment type="catalytic activity">
    <reaction evidence="2">
        <text>ATP + H2O = ADP + phosphate + H(+)</text>
        <dbReference type="Rhea" id="RHEA:13065"/>
        <dbReference type="ChEBI" id="CHEBI:15377"/>
        <dbReference type="ChEBI" id="CHEBI:15378"/>
        <dbReference type="ChEBI" id="CHEBI:30616"/>
        <dbReference type="ChEBI" id="CHEBI:43474"/>
        <dbReference type="ChEBI" id="CHEBI:456216"/>
        <dbReference type="EC" id="3.6.4.10"/>
    </reaction>
</comment>
<comment type="activity regulation">
    <text evidence="2">In the resting state, through the dimerization of its C-terminal domain, HSP90 forms a homodimer which is defined as the open conformation. Upon ATP-binding, the N-terminal domain undergoes significant conformational changes and comes in contact to form an active closed conformation. After HSP90 finishes its chaperoning tasks of assisting the proper folding, stabilization and activation of client proteins under the active state, ATP molecule is hydrolyzed to ADP which then dissociates from HSP90 and directs the protein back to the resting state. Co-chaperone TSC1 promotes ATP binding and inhibits HSP90AA1 ATPase activity. Binding to phosphorylated AHSA1 promotes HSP90AA1 ATPase activity. Inhibited by geldanamycin, Ganetespib (STA-9090) and SNX-2112.</text>
</comment>
<comment type="subunit">
    <text evidence="2 3 4">Homodimer. Identified in NR3C1/GCR steroid receptor-chaperone complexes formed at least by NR3C1, HSP90AA1 and a variety of proteins containing TPR repeats such as FKBP4, FKBP5, PPID, PPP5C or STIP1. Forms a complex containing HSP90AA1, TSC1 and TSC2; TSC1 is required to recruit TCS2 to the complex. The closed form interacts (via the middle domain and TPR repeat-binding motif) with co-chaperone TSC1 (via C-terminus). Interacts with TOM34. Interacts with TERT; the interaction, together with PTGES3, is required for correct assembly and stabilization of the TERT holoenzyme complex. Interacts with CHORDC1 and DNAJC7. Interacts with STUB1 and UBE2N; may couple the chaperone and ubiquitination systems. Interacts (via TPR repeat-binding motif) with PPP5C (via TPR repeats); the interaction is direct and activates PPP5C phosphatase activity. Following LPS binding, may form a complex with CXCR4, GDF5 and HSPA8. Interacts with KSR1. Interacts with co-chaperone CDC37 (via C-terminus); the interaction inhibits HSP90AA1 ATPase activity. May interact with NWD1. Interacts with FNIP1 and FNIP2; the interaction inhibits HSP90AA1 ATPase activity. Interacts with co-chaperone AHSA1 (phosphorylated on 'Tyr-223'); the interaction activates HSP90AA1 ATPase activity and results in the dissociation of TSC1 from HSP90AA1. Interacts with FLCN in the presence of FNIP1. Interacts with HSP70, STIP1 and PTGES3. Interacts with SMYD3; this interaction enhances SMYD3 histone-lysine N-methyltransferase. Interacts with SGTA (via TPR repeats). Interacts with TTC1 (via TPR repeats). Interacts with HSF1 in an ATP-dependent manner. Interacts with MET; the interaction suppresses MET kinase activity. Interacts with ERBB2 in an ATP-dependent manner; the interaction suppresses ERBB2 kinase activity. Interacts with HIF1A, KEAP1 and RHOBTB2. Interacts with HSF1; this interaction is decreased in a IER5-dependent manner, promoting HSF1 accumulation in the nucleus, homotrimerization and DNA-binding activities. Interacts with STUB1 and SMAD3. Interacts with HSP90AB1; interaction is constitutive (By similarity). Interacts with HECTD1 (via N-terminus) (By similarity). Interacts with NR3C1 (via domain NR LBD) and NR1D1 (via domain NR LBD) (By similarity). Interacts with NLPR12 (By similarity). Interacts with PDCL3 (By similarity). Interacts with TOMM70; the interaction is required for preprotein mitochondrial import. Interacts with TOMM70, IRF3 and TBK1; the interactions are direct and mediate the association of TOMM70 with IRF3 and TBK1 (By similarity). Forms a complex with ASL, ASS1 and NOS2; the complex regulates cell-autonomous L-arginine synthesis and citrulline recycling while channeling extracellular L-arginine to nitric oxide synthesis pathway.</text>
</comment>
<comment type="subcellular location">
    <subcellularLocation>
        <location evidence="3">Nucleus</location>
    </subcellularLocation>
    <subcellularLocation>
        <location evidence="3">Cytoplasm</location>
    </subcellularLocation>
    <subcellularLocation>
        <location evidence="2">Melanosome</location>
    </subcellularLocation>
    <subcellularLocation>
        <location evidence="2">Cell membrane</location>
    </subcellularLocation>
    <subcellularLocation>
        <location evidence="2">Mitochondrion</location>
    </subcellularLocation>
</comment>
<comment type="domain">
    <text evidence="2">The TPR repeat-binding motif mediates interaction with TPR repeat-containing proteins like the co-chaperone STUB1.</text>
</comment>
<comment type="PTM">
    <text evidence="2">ISGylated.</text>
</comment>
<comment type="PTM">
    <text evidence="2">S-nitrosylated; negatively regulates the ATPase activity and the activation of eNOS by HSP90AA1.</text>
</comment>
<comment type="PTM">
    <text evidence="3">Ubiquitinated via 'Lys-63'-linked polyubiquitination by HECTD1. Ubiquitination promotes translocation into the cytoplasm away from the membrane and secretory pathways.</text>
</comment>
<comment type="similarity">
    <text evidence="6">Belongs to the heat shock protein 90 family.</text>
</comment>
<gene>
    <name type="primary">HSP90AA1</name>
    <name type="synonym">HSP90A</name>
    <name type="synonym">HSPCA</name>
</gene>
<feature type="chain" id="PRO_0000062909" description="Heat shock protein HSP 90-alpha">
    <location>
        <begin position="1"/>
        <end position="733"/>
    </location>
</feature>
<feature type="region of interest" description="Interaction with NR3C1" evidence="3">
    <location>
        <begin position="9"/>
        <end position="236"/>
    </location>
</feature>
<feature type="region of interest" description="Disordered" evidence="5">
    <location>
        <begin position="225"/>
        <end position="279"/>
    </location>
</feature>
<feature type="region of interest" description="Interaction with NR3C1" evidence="3">
    <location>
        <begin position="272"/>
        <end position="617"/>
    </location>
</feature>
<feature type="region of interest" description="Interaction with FLCN and FNIP1" evidence="2">
    <location>
        <begin position="285"/>
        <end position="733"/>
    </location>
</feature>
<feature type="region of interest" description="Interaction with FNIP2 and TSC1" evidence="2">
    <location>
        <begin position="285"/>
        <end position="621"/>
    </location>
</feature>
<feature type="region of interest" description="Interaction with NR1D1" evidence="3">
    <location>
        <begin position="629"/>
        <end position="732"/>
    </location>
</feature>
<feature type="region of interest" description="Required for homodimerization" evidence="2">
    <location>
        <begin position="683"/>
        <end position="733"/>
    </location>
</feature>
<feature type="region of interest" description="Disordered" evidence="5">
    <location>
        <begin position="701"/>
        <end position="733"/>
    </location>
</feature>
<feature type="region of interest" description="Essential for interaction with SMYD3, TSC1 and STIP1/HOP" evidence="2">
    <location>
        <begin position="729"/>
        <end position="733"/>
    </location>
</feature>
<feature type="region of interest" description="Essential for interaction with SGTA and TTC1" evidence="2">
    <location>
        <begin position="730"/>
        <end position="733"/>
    </location>
</feature>
<feature type="short sequence motif" description="TPR repeat-binding" evidence="2">
    <location>
        <begin position="724"/>
        <end position="733"/>
    </location>
</feature>
<feature type="compositionally biased region" description="Acidic residues" evidence="5">
    <location>
        <begin position="230"/>
        <end position="246"/>
    </location>
</feature>
<feature type="compositionally biased region" description="Acidic residues" evidence="5">
    <location>
        <begin position="256"/>
        <end position="269"/>
    </location>
</feature>
<feature type="binding site" evidence="1">
    <location>
        <position position="51"/>
    </location>
    <ligand>
        <name>ATP</name>
        <dbReference type="ChEBI" id="CHEBI:30616"/>
    </ligand>
</feature>
<feature type="binding site" evidence="1">
    <location>
        <position position="93"/>
    </location>
    <ligand>
        <name>ATP</name>
        <dbReference type="ChEBI" id="CHEBI:30616"/>
    </ligand>
</feature>
<feature type="binding site" evidence="1">
    <location>
        <position position="112"/>
    </location>
    <ligand>
        <name>ATP</name>
        <dbReference type="ChEBI" id="CHEBI:30616"/>
    </ligand>
</feature>
<feature type="binding site" evidence="1">
    <location>
        <position position="138"/>
    </location>
    <ligand>
        <name>ATP</name>
        <dbReference type="ChEBI" id="CHEBI:30616"/>
    </ligand>
</feature>
<feature type="binding site" evidence="1">
    <location>
        <position position="401"/>
    </location>
    <ligand>
        <name>ATP</name>
        <dbReference type="ChEBI" id="CHEBI:30616"/>
    </ligand>
</feature>
<feature type="modified residue" description="Phosphothreonine; by PRKDC" evidence="2">
    <location>
        <position position="5"/>
    </location>
</feature>
<feature type="modified residue" description="Phosphothreonine; by PRKDC" evidence="2">
    <location>
        <position position="7"/>
    </location>
</feature>
<feature type="modified residue" description="N6-acetyllysine" evidence="3">
    <location>
        <position position="58"/>
    </location>
</feature>
<feature type="modified residue" description="N6-acetyllysine" evidence="3">
    <location>
        <position position="84"/>
    </location>
</feature>
<feature type="modified residue" description="Phosphoserine" evidence="2">
    <location>
        <position position="231"/>
    </location>
</feature>
<feature type="modified residue" description="Phosphoserine" evidence="2">
    <location>
        <position position="263"/>
    </location>
</feature>
<feature type="modified residue" description="Phosphotyrosine" evidence="3">
    <location>
        <position position="314"/>
    </location>
</feature>
<feature type="modified residue" description="N6-acetyllysine" evidence="2">
    <location>
        <position position="444"/>
    </location>
</feature>
<feature type="modified residue" description="Phosphoserine" evidence="4">
    <location>
        <position position="454"/>
    </location>
</feature>
<feature type="modified residue" description="N6-acetyllysine" evidence="2">
    <location>
        <position position="459"/>
    </location>
</feature>
<feature type="modified residue" description="Phosphoserine" evidence="2">
    <location>
        <position position="477"/>
    </location>
</feature>
<feature type="modified residue" description="N6-acetyllysine" evidence="2">
    <location>
        <position position="490"/>
    </location>
</feature>
<feature type="modified residue" description="Phosphotyrosine" evidence="3">
    <location>
        <position position="493"/>
    </location>
</feature>
<feature type="modified residue" description="N6-acetyllysine" evidence="2">
    <location>
        <position position="586"/>
    </location>
</feature>
<feature type="modified residue" description="S-nitrosocysteine" evidence="2">
    <location>
        <position position="599"/>
    </location>
</feature>
<feature type="modified residue" description="Phosphoserine" evidence="2">
    <location>
        <position position="642"/>
    </location>
</feature>
<name>HS90A_CRIGR</name>
<keyword id="KW-0007">Acetylation</keyword>
<keyword id="KW-0067">ATP-binding</keyword>
<keyword id="KW-1003">Cell membrane</keyword>
<keyword id="KW-0143">Chaperone</keyword>
<keyword id="KW-0963">Cytoplasm</keyword>
<keyword id="KW-0378">Hydrolase</keyword>
<keyword id="KW-0472">Membrane</keyword>
<keyword id="KW-0496">Mitochondrion</keyword>
<keyword id="KW-0547">Nucleotide-binding</keyword>
<keyword id="KW-0539">Nucleus</keyword>
<keyword id="KW-0597">Phosphoprotein</keyword>
<keyword id="KW-0702">S-nitrosylation</keyword>
<keyword id="KW-0346">Stress response</keyword>
<keyword id="KW-0832">Ubl conjugation</keyword>
<dbReference type="EC" id="3.6.4.10" evidence="2"/>
<dbReference type="EMBL" id="L33676">
    <property type="protein sequence ID" value="AAA36992.1"/>
    <property type="molecule type" value="mRNA"/>
</dbReference>
<dbReference type="RefSeq" id="NP_001233750.1">
    <property type="nucleotide sequence ID" value="NM_001246821.1"/>
</dbReference>
<dbReference type="SMR" id="P46633"/>
<dbReference type="iPTMnet" id="P46633"/>
<dbReference type="PaxDb" id="10029-NP_001233750.1"/>
<dbReference type="GeneID" id="100689397"/>
<dbReference type="KEGG" id="cge:100689397"/>
<dbReference type="CTD" id="3320"/>
<dbReference type="eggNOG" id="KOG0019">
    <property type="taxonomic scope" value="Eukaryota"/>
</dbReference>
<dbReference type="OrthoDB" id="5426351at2759"/>
<dbReference type="Proteomes" id="UP000694386">
    <property type="component" value="Unplaced"/>
</dbReference>
<dbReference type="Proteomes" id="UP001108280">
    <property type="component" value="Chromosome 5"/>
</dbReference>
<dbReference type="GO" id="GO:0005737">
    <property type="term" value="C:cytoplasm"/>
    <property type="evidence" value="ECO:0000250"/>
    <property type="project" value="AgBase"/>
</dbReference>
<dbReference type="GO" id="GO:0042470">
    <property type="term" value="C:melanosome"/>
    <property type="evidence" value="ECO:0007669"/>
    <property type="project" value="UniProtKB-SubCell"/>
</dbReference>
<dbReference type="GO" id="GO:0005739">
    <property type="term" value="C:mitochondrion"/>
    <property type="evidence" value="ECO:0000250"/>
    <property type="project" value="UniProtKB"/>
</dbReference>
<dbReference type="GO" id="GO:0005634">
    <property type="term" value="C:nucleus"/>
    <property type="evidence" value="ECO:0000250"/>
    <property type="project" value="AgBase"/>
</dbReference>
<dbReference type="GO" id="GO:0005886">
    <property type="term" value="C:plasma membrane"/>
    <property type="evidence" value="ECO:0007669"/>
    <property type="project" value="UniProtKB-SubCell"/>
</dbReference>
<dbReference type="GO" id="GO:0005524">
    <property type="term" value="F:ATP binding"/>
    <property type="evidence" value="ECO:0000250"/>
    <property type="project" value="UniProtKB"/>
</dbReference>
<dbReference type="GO" id="GO:0016887">
    <property type="term" value="F:ATP hydrolysis activity"/>
    <property type="evidence" value="ECO:0007669"/>
    <property type="project" value="InterPro"/>
</dbReference>
<dbReference type="GO" id="GO:0140662">
    <property type="term" value="F:ATP-dependent protein folding chaperone"/>
    <property type="evidence" value="ECO:0007669"/>
    <property type="project" value="InterPro"/>
</dbReference>
<dbReference type="GO" id="GO:0030235">
    <property type="term" value="F:nitric-oxide synthase regulator activity"/>
    <property type="evidence" value="ECO:0000250"/>
    <property type="project" value="UniProtKB"/>
</dbReference>
<dbReference type="GO" id="GO:0030911">
    <property type="term" value="F:TPR domain binding"/>
    <property type="evidence" value="ECO:0000250"/>
    <property type="project" value="UniProtKB"/>
</dbReference>
<dbReference type="GO" id="GO:0051082">
    <property type="term" value="F:unfolded protein binding"/>
    <property type="evidence" value="ECO:0007669"/>
    <property type="project" value="InterPro"/>
</dbReference>
<dbReference type="GO" id="GO:0002218">
    <property type="term" value="P:activation of innate immune response"/>
    <property type="evidence" value="ECO:0000250"/>
    <property type="project" value="UniProtKB"/>
</dbReference>
<dbReference type="GO" id="GO:0098586">
    <property type="term" value="P:cellular response to virus"/>
    <property type="evidence" value="ECO:0000250"/>
    <property type="project" value="UniProtKB"/>
</dbReference>
<dbReference type="GO" id="GO:0002230">
    <property type="term" value="P:positive regulation of defense response to virus by host"/>
    <property type="evidence" value="ECO:0000250"/>
    <property type="project" value="UniProtKB"/>
</dbReference>
<dbReference type="GO" id="GO:0032728">
    <property type="term" value="P:positive regulation of interferon-beta production"/>
    <property type="evidence" value="ECO:0000250"/>
    <property type="project" value="UniProtKB"/>
</dbReference>
<dbReference type="GO" id="GO:0045429">
    <property type="term" value="P:positive regulation of nitric oxide biosynthetic process"/>
    <property type="evidence" value="ECO:0000250"/>
    <property type="project" value="UniProtKB"/>
</dbReference>
<dbReference type="GO" id="GO:0042981">
    <property type="term" value="P:regulation of apoptotic process"/>
    <property type="evidence" value="ECO:0000250"/>
    <property type="project" value="UniProtKB"/>
</dbReference>
<dbReference type="GO" id="GO:0046677">
    <property type="term" value="P:response to antibiotic"/>
    <property type="evidence" value="ECO:0000250"/>
    <property type="project" value="AgBase"/>
</dbReference>
<dbReference type="GO" id="GO:0009409">
    <property type="term" value="P:response to cold"/>
    <property type="evidence" value="ECO:0000250"/>
    <property type="project" value="AgBase"/>
</dbReference>
<dbReference type="GO" id="GO:0009408">
    <property type="term" value="P:response to heat"/>
    <property type="evidence" value="ECO:0000250"/>
    <property type="project" value="AgBase"/>
</dbReference>
<dbReference type="CDD" id="cd16927">
    <property type="entry name" value="HATPase_Hsp90-like"/>
    <property type="match status" value="1"/>
</dbReference>
<dbReference type="FunFam" id="1.20.120.790:FF:000001">
    <property type="entry name" value="Heat shock protein 90 alpha"/>
    <property type="match status" value="1"/>
</dbReference>
<dbReference type="FunFam" id="3.30.230.80:FF:000001">
    <property type="entry name" value="Heat shock protein 90 alpha"/>
    <property type="match status" value="1"/>
</dbReference>
<dbReference type="FunFam" id="3.40.50.11260:FF:000001">
    <property type="entry name" value="Heat shock protein 90 alpha"/>
    <property type="match status" value="1"/>
</dbReference>
<dbReference type="FunFam" id="3.30.565.10:FF:000204">
    <property type="entry name" value="Heat shock protein HSP 90-beta"/>
    <property type="match status" value="1"/>
</dbReference>
<dbReference type="Gene3D" id="3.30.230.80">
    <property type="match status" value="1"/>
</dbReference>
<dbReference type="Gene3D" id="3.40.50.11260">
    <property type="match status" value="1"/>
</dbReference>
<dbReference type="Gene3D" id="1.20.120.790">
    <property type="entry name" value="Heat shock protein 90, C-terminal domain"/>
    <property type="match status" value="1"/>
</dbReference>
<dbReference type="Gene3D" id="3.30.565.10">
    <property type="entry name" value="Histidine kinase-like ATPase, C-terminal domain"/>
    <property type="match status" value="1"/>
</dbReference>
<dbReference type="HAMAP" id="MF_00505">
    <property type="entry name" value="HSP90"/>
    <property type="match status" value="1"/>
</dbReference>
<dbReference type="InterPro" id="IPR036890">
    <property type="entry name" value="HATPase_C_sf"/>
</dbReference>
<dbReference type="InterPro" id="IPR019805">
    <property type="entry name" value="Heat_shock_protein_90_CS"/>
</dbReference>
<dbReference type="InterPro" id="IPR037196">
    <property type="entry name" value="HSP90_C"/>
</dbReference>
<dbReference type="InterPro" id="IPR001404">
    <property type="entry name" value="Hsp90_fam"/>
</dbReference>
<dbReference type="InterPro" id="IPR020575">
    <property type="entry name" value="Hsp90_N"/>
</dbReference>
<dbReference type="InterPro" id="IPR020568">
    <property type="entry name" value="Ribosomal_Su5_D2-typ_SF"/>
</dbReference>
<dbReference type="NCBIfam" id="NF003555">
    <property type="entry name" value="PRK05218.1"/>
    <property type="match status" value="1"/>
</dbReference>
<dbReference type="PANTHER" id="PTHR11528">
    <property type="entry name" value="HEAT SHOCK PROTEIN 90 FAMILY MEMBER"/>
    <property type="match status" value="1"/>
</dbReference>
<dbReference type="Pfam" id="PF13589">
    <property type="entry name" value="HATPase_c_3"/>
    <property type="match status" value="1"/>
</dbReference>
<dbReference type="Pfam" id="PF00183">
    <property type="entry name" value="HSP90"/>
    <property type="match status" value="1"/>
</dbReference>
<dbReference type="PIRSF" id="PIRSF002583">
    <property type="entry name" value="Hsp90"/>
    <property type="match status" value="1"/>
</dbReference>
<dbReference type="PRINTS" id="PR00775">
    <property type="entry name" value="HEATSHOCK90"/>
</dbReference>
<dbReference type="SMART" id="SM00387">
    <property type="entry name" value="HATPase_c"/>
    <property type="match status" value="1"/>
</dbReference>
<dbReference type="SUPFAM" id="SSF55874">
    <property type="entry name" value="ATPase domain of HSP90 chaperone/DNA topoisomerase II/histidine kinase"/>
    <property type="match status" value="1"/>
</dbReference>
<dbReference type="SUPFAM" id="SSF110942">
    <property type="entry name" value="HSP90 C-terminal domain"/>
    <property type="match status" value="1"/>
</dbReference>
<dbReference type="SUPFAM" id="SSF54211">
    <property type="entry name" value="Ribosomal protein S5 domain 2-like"/>
    <property type="match status" value="1"/>
</dbReference>
<dbReference type="PROSITE" id="PS00298">
    <property type="entry name" value="HSP90"/>
    <property type="match status" value="1"/>
</dbReference>